<dbReference type="EC" id="5.1.1.1" evidence="1"/>
<dbReference type="EMBL" id="AL513382">
    <property type="protein sequence ID" value="CAD09518.1"/>
    <property type="molecule type" value="Genomic_DNA"/>
</dbReference>
<dbReference type="EMBL" id="AE014613">
    <property type="protein sequence ID" value="AAO71021.1"/>
    <property type="molecule type" value="Genomic_DNA"/>
</dbReference>
<dbReference type="RefSeq" id="NP_457948.1">
    <property type="nucleotide sequence ID" value="NC_003198.1"/>
</dbReference>
<dbReference type="SMR" id="Q8Z300"/>
<dbReference type="STRING" id="220341.gene:17587629"/>
<dbReference type="KEGG" id="stt:t3513"/>
<dbReference type="KEGG" id="sty:STY3763"/>
<dbReference type="PATRIC" id="fig|220341.7.peg.3838"/>
<dbReference type="eggNOG" id="COG0787">
    <property type="taxonomic scope" value="Bacteria"/>
</dbReference>
<dbReference type="HOGENOM" id="CLU_028393_1_1_6"/>
<dbReference type="OMA" id="HMTHFSD"/>
<dbReference type="OrthoDB" id="9813814at2"/>
<dbReference type="UniPathway" id="UPA00042">
    <property type="reaction ID" value="UER00497"/>
</dbReference>
<dbReference type="Proteomes" id="UP000000541">
    <property type="component" value="Chromosome"/>
</dbReference>
<dbReference type="Proteomes" id="UP000002670">
    <property type="component" value="Chromosome"/>
</dbReference>
<dbReference type="GO" id="GO:0005829">
    <property type="term" value="C:cytosol"/>
    <property type="evidence" value="ECO:0007669"/>
    <property type="project" value="TreeGrafter"/>
</dbReference>
<dbReference type="GO" id="GO:0008784">
    <property type="term" value="F:alanine racemase activity"/>
    <property type="evidence" value="ECO:0007669"/>
    <property type="project" value="UniProtKB-UniRule"/>
</dbReference>
<dbReference type="GO" id="GO:0030170">
    <property type="term" value="F:pyridoxal phosphate binding"/>
    <property type="evidence" value="ECO:0007669"/>
    <property type="project" value="UniProtKB-UniRule"/>
</dbReference>
<dbReference type="GO" id="GO:0030632">
    <property type="term" value="P:D-alanine biosynthetic process"/>
    <property type="evidence" value="ECO:0007669"/>
    <property type="project" value="UniProtKB-UniRule"/>
</dbReference>
<dbReference type="CDD" id="cd00430">
    <property type="entry name" value="PLPDE_III_AR"/>
    <property type="match status" value="1"/>
</dbReference>
<dbReference type="Gene3D" id="3.20.20.10">
    <property type="entry name" value="Alanine racemase"/>
    <property type="match status" value="1"/>
</dbReference>
<dbReference type="Gene3D" id="2.40.37.10">
    <property type="entry name" value="Lyase, Ornithine Decarboxylase, Chain A, domain 1"/>
    <property type="match status" value="1"/>
</dbReference>
<dbReference type="HAMAP" id="MF_01201">
    <property type="entry name" value="Ala_racemase"/>
    <property type="match status" value="1"/>
</dbReference>
<dbReference type="InterPro" id="IPR000821">
    <property type="entry name" value="Ala_racemase"/>
</dbReference>
<dbReference type="InterPro" id="IPR009006">
    <property type="entry name" value="Ala_racemase/Decarboxylase_C"/>
</dbReference>
<dbReference type="InterPro" id="IPR011079">
    <property type="entry name" value="Ala_racemase_C"/>
</dbReference>
<dbReference type="InterPro" id="IPR001608">
    <property type="entry name" value="Ala_racemase_N"/>
</dbReference>
<dbReference type="InterPro" id="IPR020622">
    <property type="entry name" value="Ala_racemase_pyridoxalP-BS"/>
</dbReference>
<dbReference type="InterPro" id="IPR029066">
    <property type="entry name" value="PLP-binding_barrel"/>
</dbReference>
<dbReference type="NCBIfam" id="TIGR00492">
    <property type="entry name" value="alr"/>
    <property type="match status" value="1"/>
</dbReference>
<dbReference type="PANTHER" id="PTHR30511">
    <property type="entry name" value="ALANINE RACEMASE"/>
    <property type="match status" value="1"/>
</dbReference>
<dbReference type="PANTHER" id="PTHR30511:SF0">
    <property type="entry name" value="ALANINE RACEMASE, CATABOLIC-RELATED"/>
    <property type="match status" value="1"/>
</dbReference>
<dbReference type="Pfam" id="PF00842">
    <property type="entry name" value="Ala_racemase_C"/>
    <property type="match status" value="1"/>
</dbReference>
<dbReference type="Pfam" id="PF01168">
    <property type="entry name" value="Ala_racemase_N"/>
    <property type="match status" value="1"/>
</dbReference>
<dbReference type="PRINTS" id="PR00992">
    <property type="entry name" value="ALARACEMASE"/>
</dbReference>
<dbReference type="SMART" id="SM01005">
    <property type="entry name" value="Ala_racemase_C"/>
    <property type="match status" value="1"/>
</dbReference>
<dbReference type="SUPFAM" id="SSF50621">
    <property type="entry name" value="Alanine racemase C-terminal domain-like"/>
    <property type="match status" value="1"/>
</dbReference>
<dbReference type="SUPFAM" id="SSF51419">
    <property type="entry name" value="PLP-binding barrel"/>
    <property type="match status" value="1"/>
</dbReference>
<dbReference type="PROSITE" id="PS00395">
    <property type="entry name" value="ALANINE_RACEMASE"/>
    <property type="match status" value="1"/>
</dbReference>
<feature type="chain" id="PRO_0000114562" description="Alanine racemase 3">
    <location>
        <begin position="1"/>
        <end position="368"/>
    </location>
</feature>
<feature type="active site" description="Proton acceptor; specific for D-alanine" evidence="1">
    <location>
        <position position="42"/>
    </location>
</feature>
<feature type="active site" description="Proton acceptor; specific for L-alanine" evidence="1">
    <location>
        <position position="262"/>
    </location>
</feature>
<feature type="binding site" evidence="1">
    <location>
        <position position="141"/>
    </location>
    <ligand>
        <name>substrate</name>
    </ligand>
</feature>
<feature type="binding site" evidence="1">
    <location>
        <position position="310"/>
    </location>
    <ligand>
        <name>substrate</name>
    </ligand>
</feature>
<feature type="modified residue" description="N6-(pyridoxal phosphate)lysine" evidence="1">
    <location>
        <position position="42"/>
    </location>
</feature>
<evidence type="ECO:0000255" key="1">
    <source>
        <dbReference type="HAMAP-Rule" id="MF_01201"/>
    </source>
</evidence>
<protein>
    <recommendedName>
        <fullName evidence="1">Alanine racemase 3</fullName>
        <ecNumber evidence="1">5.1.1.1</ecNumber>
    </recommendedName>
</protein>
<name>ALR3_SALTI</name>
<reference key="1">
    <citation type="journal article" date="2001" name="Nature">
        <title>Complete genome sequence of a multiple drug resistant Salmonella enterica serovar Typhi CT18.</title>
        <authorList>
            <person name="Parkhill J."/>
            <person name="Dougan G."/>
            <person name="James K.D."/>
            <person name="Thomson N.R."/>
            <person name="Pickard D."/>
            <person name="Wain J."/>
            <person name="Churcher C.M."/>
            <person name="Mungall K.L."/>
            <person name="Bentley S.D."/>
            <person name="Holden M.T.G."/>
            <person name="Sebaihia M."/>
            <person name="Baker S."/>
            <person name="Basham D."/>
            <person name="Brooks K."/>
            <person name="Chillingworth T."/>
            <person name="Connerton P."/>
            <person name="Cronin A."/>
            <person name="Davis P."/>
            <person name="Davies R.M."/>
            <person name="Dowd L."/>
            <person name="White N."/>
            <person name="Farrar J."/>
            <person name="Feltwell T."/>
            <person name="Hamlin N."/>
            <person name="Haque A."/>
            <person name="Hien T.T."/>
            <person name="Holroyd S."/>
            <person name="Jagels K."/>
            <person name="Krogh A."/>
            <person name="Larsen T.S."/>
            <person name="Leather S."/>
            <person name="Moule S."/>
            <person name="O'Gaora P."/>
            <person name="Parry C."/>
            <person name="Quail M.A."/>
            <person name="Rutherford K.M."/>
            <person name="Simmonds M."/>
            <person name="Skelton J."/>
            <person name="Stevens K."/>
            <person name="Whitehead S."/>
            <person name="Barrell B.G."/>
        </authorList>
    </citation>
    <scope>NUCLEOTIDE SEQUENCE [LARGE SCALE GENOMIC DNA]</scope>
    <source>
        <strain>CT18</strain>
    </source>
</reference>
<reference key="2">
    <citation type="journal article" date="2003" name="J. Bacteriol.">
        <title>Comparative genomics of Salmonella enterica serovar Typhi strains Ty2 and CT18.</title>
        <authorList>
            <person name="Deng W."/>
            <person name="Liou S.-R."/>
            <person name="Plunkett G. III"/>
            <person name="Mayhew G.F."/>
            <person name="Rose D.J."/>
            <person name="Burland V."/>
            <person name="Kodoyianni V."/>
            <person name="Schwartz D.C."/>
            <person name="Blattner F.R."/>
        </authorList>
    </citation>
    <scope>NUCLEOTIDE SEQUENCE [LARGE SCALE GENOMIC DNA]</scope>
    <source>
        <strain>ATCC 700931 / Ty2</strain>
    </source>
</reference>
<comment type="function">
    <text evidence="1">Catalyzes the interconversion of L-alanine and D-alanine. May also act on other amino acids.</text>
</comment>
<comment type="catalytic activity">
    <reaction evidence="1">
        <text>L-alanine = D-alanine</text>
        <dbReference type="Rhea" id="RHEA:20249"/>
        <dbReference type="ChEBI" id="CHEBI:57416"/>
        <dbReference type="ChEBI" id="CHEBI:57972"/>
        <dbReference type="EC" id="5.1.1.1"/>
    </reaction>
</comment>
<comment type="cofactor">
    <cofactor evidence="1">
        <name>pyridoxal 5'-phosphate</name>
        <dbReference type="ChEBI" id="CHEBI:597326"/>
    </cofactor>
</comment>
<comment type="pathway">
    <text evidence="1">Amino-acid biosynthesis; D-alanine biosynthesis; D-alanine from L-alanine: step 1/1.</text>
</comment>
<comment type="similarity">
    <text evidence="1">Belongs to the alanine racemase family.</text>
</comment>
<organism>
    <name type="scientific">Salmonella typhi</name>
    <dbReference type="NCBI Taxonomy" id="90370"/>
    <lineage>
        <taxon>Bacteria</taxon>
        <taxon>Pseudomonadati</taxon>
        <taxon>Pseudomonadota</taxon>
        <taxon>Gammaproteobacteria</taxon>
        <taxon>Enterobacterales</taxon>
        <taxon>Enterobacteriaceae</taxon>
        <taxon>Salmonella</taxon>
    </lineage>
</organism>
<gene>
    <name type="primary">alr3</name>
    <name type="ordered locus">STY3763</name>
    <name type="ordered locus">t3513</name>
</gene>
<accession>Q8Z300</accession>
<keyword id="KW-0413">Isomerase</keyword>
<keyword id="KW-0663">Pyridoxal phosphate</keyword>
<sequence>MMKLAEIQAACGVLCVDLAAVVDNYQTLARHVAPAQCGAVLKANGYGLGAEAIAPALYAANCRIFFVAQLSEGVALRNILSADAMVVLLNGVMPQAMPFCCAQQITPLLNSVDQVMTWLALQEARSQRRPVLIQLDSGMSRLGVTPEQLARLAAIFRQRGWAAPDYIISHLANADRPDHALNVYQHTLLQQAKKAFPTSRYSLANSCGMFLHPAWREDLCRPGVALFGVAQPWFSTPLKPAFTLTLTILRVQDVPVGTPIGYGSTVTTTRPLRIATVSAGYADGIPRNLRPPAGVCWRGVRLPVLGRVCMDSFMVDASAIMPTSGDVVEFIGVSQTLEEVAAACDTIPYEIMARLGARFRRIMQPAEA</sequence>
<proteinExistence type="inferred from homology"/>